<name>APT_CLOK5</name>
<gene>
    <name evidence="1" type="primary">apt</name>
    <name type="ordered locus">CKL_3132</name>
</gene>
<sequence length="172" mass="18928">MNLQDNIRIVEGFPKKGISFKDITTLIRDKDAFKYAVDKIAGYLKDKNIDVVVGPEARGFLFGAPIAYTLGAGFVPVRKQGKLPYDTLSIKYDLEYGSDVLQIHKDAINKGDRVALVDDLLATGGTTSSVVKLIEQAGGEIVTIDFVIELTDLKGREKLKGYDVLSLIKYDI</sequence>
<proteinExistence type="inferred from homology"/>
<evidence type="ECO:0000255" key="1">
    <source>
        <dbReference type="HAMAP-Rule" id="MF_00004"/>
    </source>
</evidence>
<keyword id="KW-0963">Cytoplasm</keyword>
<keyword id="KW-0328">Glycosyltransferase</keyword>
<keyword id="KW-0660">Purine salvage</keyword>
<keyword id="KW-1185">Reference proteome</keyword>
<keyword id="KW-0808">Transferase</keyword>
<accession>A5N1Z4</accession>
<reference key="1">
    <citation type="journal article" date="2008" name="Proc. Natl. Acad. Sci. U.S.A.">
        <title>The genome of Clostridium kluyveri, a strict anaerobe with unique metabolic features.</title>
        <authorList>
            <person name="Seedorf H."/>
            <person name="Fricke W.F."/>
            <person name="Veith B."/>
            <person name="Brueggemann H."/>
            <person name="Liesegang H."/>
            <person name="Strittmatter A."/>
            <person name="Miethke M."/>
            <person name="Buckel W."/>
            <person name="Hinderberger J."/>
            <person name="Li F."/>
            <person name="Hagemeier C."/>
            <person name="Thauer R.K."/>
            <person name="Gottschalk G."/>
        </authorList>
    </citation>
    <scope>NUCLEOTIDE SEQUENCE [LARGE SCALE GENOMIC DNA]</scope>
    <source>
        <strain>ATCC 8527 / DSM 555 / NBRC 12016 / NCIMB 10680 / K1</strain>
    </source>
</reference>
<dbReference type="EC" id="2.4.2.7" evidence="1"/>
<dbReference type="EMBL" id="CP000673">
    <property type="protein sequence ID" value="EDK35140.1"/>
    <property type="molecule type" value="Genomic_DNA"/>
</dbReference>
<dbReference type="RefSeq" id="WP_012103475.1">
    <property type="nucleotide sequence ID" value="NC_009706.1"/>
</dbReference>
<dbReference type="SMR" id="A5N1Z4"/>
<dbReference type="STRING" id="431943.CKL_3132"/>
<dbReference type="KEGG" id="ckl:CKL_3132"/>
<dbReference type="eggNOG" id="COG0503">
    <property type="taxonomic scope" value="Bacteria"/>
</dbReference>
<dbReference type="HOGENOM" id="CLU_063339_3_0_9"/>
<dbReference type="UniPathway" id="UPA00588">
    <property type="reaction ID" value="UER00646"/>
</dbReference>
<dbReference type="Proteomes" id="UP000002411">
    <property type="component" value="Chromosome"/>
</dbReference>
<dbReference type="GO" id="GO:0005737">
    <property type="term" value="C:cytoplasm"/>
    <property type="evidence" value="ECO:0007669"/>
    <property type="project" value="UniProtKB-SubCell"/>
</dbReference>
<dbReference type="GO" id="GO:0002055">
    <property type="term" value="F:adenine binding"/>
    <property type="evidence" value="ECO:0007669"/>
    <property type="project" value="TreeGrafter"/>
</dbReference>
<dbReference type="GO" id="GO:0003999">
    <property type="term" value="F:adenine phosphoribosyltransferase activity"/>
    <property type="evidence" value="ECO:0007669"/>
    <property type="project" value="UniProtKB-UniRule"/>
</dbReference>
<dbReference type="GO" id="GO:0016208">
    <property type="term" value="F:AMP binding"/>
    <property type="evidence" value="ECO:0007669"/>
    <property type="project" value="TreeGrafter"/>
</dbReference>
<dbReference type="GO" id="GO:0006168">
    <property type="term" value="P:adenine salvage"/>
    <property type="evidence" value="ECO:0007669"/>
    <property type="project" value="InterPro"/>
</dbReference>
<dbReference type="GO" id="GO:0044209">
    <property type="term" value="P:AMP salvage"/>
    <property type="evidence" value="ECO:0007669"/>
    <property type="project" value="UniProtKB-UniRule"/>
</dbReference>
<dbReference type="GO" id="GO:0006166">
    <property type="term" value="P:purine ribonucleoside salvage"/>
    <property type="evidence" value="ECO:0007669"/>
    <property type="project" value="UniProtKB-KW"/>
</dbReference>
<dbReference type="CDD" id="cd06223">
    <property type="entry name" value="PRTases_typeI"/>
    <property type="match status" value="1"/>
</dbReference>
<dbReference type="FunFam" id="3.40.50.2020:FF:000004">
    <property type="entry name" value="Adenine phosphoribosyltransferase"/>
    <property type="match status" value="1"/>
</dbReference>
<dbReference type="Gene3D" id="3.40.50.2020">
    <property type="match status" value="1"/>
</dbReference>
<dbReference type="HAMAP" id="MF_00004">
    <property type="entry name" value="Aden_phosphoribosyltr"/>
    <property type="match status" value="1"/>
</dbReference>
<dbReference type="InterPro" id="IPR005764">
    <property type="entry name" value="Ade_phspho_trans"/>
</dbReference>
<dbReference type="InterPro" id="IPR000836">
    <property type="entry name" value="PRibTrfase_dom"/>
</dbReference>
<dbReference type="InterPro" id="IPR029057">
    <property type="entry name" value="PRTase-like"/>
</dbReference>
<dbReference type="InterPro" id="IPR050054">
    <property type="entry name" value="UPRTase/APRTase"/>
</dbReference>
<dbReference type="NCBIfam" id="TIGR01090">
    <property type="entry name" value="apt"/>
    <property type="match status" value="1"/>
</dbReference>
<dbReference type="NCBIfam" id="NF002633">
    <property type="entry name" value="PRK02304.1-2"/>
    <property type="match status" value="1"/>
</dbReference>
<dbReference type="NCBIfam" id="NF002634">
    <property type="entry name" value="PRK02304.1-3"/>
    <property type="match status" value="1"/>
</dbReference>
<dbReference type="NCBIfam" id="NF002636">
    <property type="entry name" value="PRK02304.1-5"/>
    <property type="match status" value="1"/>
</dbReference>
<dbReference type="PANTHER" id="PTHR32315">
    <property type="entry name" value="ADENINE PHOSPHORIBOSYLTRANSFERASE"/>
    <property type="match status" value="1"/>
</dbReference>
<dbReference type="PANTHER" id="PTHR32315:SF3">
    <property type="entry name" value="ADENINE PHOSPHORIBOSYLTRANSFERASE"/>
    <property type="match status" value="1"/>
</dbReference>
<dbReference type="Pfam" id="PF00156">
    <property type="entry name" value="Pribosyltran"/>
    <property type="match status" value="1"/>
</dbReference>
<dbReference type="SUPFAM" id="SSF53271">
    <property type="entry name" value="PRTase-like"/>
    <property type="match status" value="1"/>
</dbReference>
<feature type="chain" id="PRO_1000073789" description="Adenine phosphoribosyltransferase">
    <location>
        <begin position="1"/>
        <end position="172"/>
    </location>
</feature>
<protein>
    <recommendedName>
        <fullName evidence="1">Adenine phosphoribosyltransferase</fullName>
        <shortName evidence="1">APRT</shortName>
        <ecNumber evidence="1">2.4.2.7</ecNumber>
    </recommendedName>
</protein>
<comment type="function">
    <text evidence="1">Catalyzes a salvage reaction resulting in the formation of AMP, that is energically less costly than de novo synthesis.</text>
</comment>
<comment type="catalytic activity">
    <reaction evidence="1">
        <text>AMP + diphosphate = 5-phospho-alpha-D-ribose 1-diphosphate + adenine</text>
        <dbReference type="Rhea" id="RHEA:16609"/>
        <dbReference type="ChEBI" id="CHEBI:16708"/>
        <dbReference type="ChEBI" id="CHEBI:33019"/>
        <dbReference type="ChEBI" id="CHEBI:58017"/>
        <dbReference type="ChEBI" id="CHEBI:456215"/>
        <dbReference type="EC" id="2.4.2.7"/>
    </reaction>
</comment>
<comment type="pathway">
    <text evidence="1">Purine metabolism; AMP biosynthesis via salvage pathway; AMP from adenine: step 1/1.</text>
</comment>
<comment type="subunit">
    <text evidence="1">Homodimer.</text>
</comment>
<comment type="subcellular location">
    <subcellularLocation>
        <location evidence="1">Cytoplasm</location>
    </subcellularLocation>
</comment>
<comment type="similarity">
    <text evidence="1">Belongs to the purine/pyrimidine phosphoribosyltransferase family.</text>
</comment>
<organism>
    <name type="scientific">Clostridium kluyveri (strain ATCC 8527 / DSM 555 / NBRC 12016 / NCIMB 10680 / K1)</name>
    <dbReference type="NCBI Taxonomy" id="431943"/>
    <lineage>
        <taxon>Bacteria</taxon>
        <taxon>Bacillati</taxon>
        <taxon>Bacillota</taxon>
        <taxon>Clostridia</taxon>
        <taxon>Eubacteriales</taxon>
        <taxon>Clostridiaceae</taxon>
        <taxon>Clostridium</taxon>
    </lineage>
</organism>